<keyword id="KW-0010">Activator</keyword>
<keyword id="KW-0903">Direct protein sequencing</keyword>
<keyword id="KW-0238">DNA-binding</keyword>
<keyword id="KW-0479">Metal-binding</keyword>
<keyword id="KW-0539">Nucleus</keyword>
<keyword id="KW-0675">Receptor</keyword>
<keyword id="KW-1185">Reference proteome</keyword>
<keyword id="KW-0804">Transcription</keyword>
<keyword id="KW-0805">Transcription regulation</keyword>
<keyword id="KW-0862">Zinc</keyword>
<keyword id="KW-0863">Zinc-finger</keyword>
<evidence type="ECO:0000255" key="1">
    <source>
        <dbReference type="PROSITE-ProRule" id="PRU00407"/>
    </source>
</evidence>
<evidence type="ECO:0000255" key="2">
    <source>
        <dbReference type="PROSITE-ProRule" id="PRU01189"/>
    </source>
</evidence>
<evidence type="ECO:0000256" key="3">
    <source>
        <dbReference type="SAM" id="MobiDB-lite"/>
    </source>
</evidence>
<evidence type="ECO:0000305" key="4"/>
<organism>
    <name type="scientific">Bombyx mori</name>
    <name type="common">Silk moth</name>
    <dbReference type="NCBI Taxonomy" id="7091"/>
    <lineage>
        <taxon>Eukaryota</taxon>
        <taxon>Metazoa</taxon>
        <taxon>Ecdysozoa</taxon>
        <taxon>Arthropoda</taxon>
        <taxon>Hexapoda</taxon>
        <taxon>Insecta</taxon>
        <taxon>Pterygota</taxon>
        <taxon>Neoptera</taxon>
        <taxon>Endopterygota</taxon>
        <taxon>Lepidoptera</taxon>
        <taxon>Glossata</taxon>
        <taxon>Ditrysia</taxon>
        <taxon>Bombycoidea</taxon>
        <taxon>Bombycidae</taxon>
        <taxon>Bombycinae</taxon>
        <taxon>Bombyx</taxon>
    </lineage>
</organism>
<proteinExistence type="evidence at protein level"/>
<sequence>MHEDAPKMSIAQSLAASTSQPKGDIVTEIPLEFAMSSMETKSIETTNVELKITYVDPTTGTGGEPGAYLPTAGTVCDQTDTKDVIEELCPVCGDKVSGYHYGLLTCESCKGFFKRTVQNKKVYTCVAERACHIDKTQRKRCPFCRFQKCLDVGMKLEAVRADRMRGGRNKFGPMYKRDRARKLQMMRQRQIAVQTLRGSLGDGGLVLGFGSPYTAVSVKQEIQIPQVSSLTSSPESSPGPALLGAQPQPPQPPPPPTHDKWEAHSPHSASPDAFTFDTQSNTAATPSSTAEATSTETLRVSPMIREFVQTVDDREWQNALFGLLQSQTYNQCEVDLFELMCKVLDQNLFSQVDWARNTVFFKYLKVDDQMKLLQDSWSVMLVLDHLHQRMHNGLPDETTLHNGQKFDLLCLGLLGVPSLADHFNELQNKLAELKFDVPDYICVKFMLLLNPEVRGIVNVKCVREGYQTVQAALLDYTLTCYPTIQDKFGKLVMVVPEIHALAARGEEHLYQRHCAGQAPTQTLLMEMLHAKRKS</sequence>
<dbReference type="EMBL" id="D10953">
    <property type="protein sequence ID" value="BAA01745.1"/>
    <property type="status" value="ALT_FRAME"/>
    <property type="molecule type" value="mRNA"/>
</dbReference>
<dbReference type="EMBL" id="AF426830">
    <property type="protein sequence ID" value="AAL30663.1"/>
    <property type="molecule type" value="mRNA"/>
</dbReference>
<dbReference type="RefSeq" id="NP_001037528.2">
    <property type="nucleotide sequence ID" value="NM_001044063.2"/>
</dbReference>
<dbReference type="SMR" id="P49867"/>
<dbReference type="FunCoup" id="P49867">
    <property type="interactions" value="568"/>
</dbReference>
<dbReference type="STRING" id="7091.P49867"/>
<dbReference type="PaxDb" id="7091-BGIBMGA000716-TA"/>
<dbReference type="EnsemblMetazoa" id="NM_001044063.3">
    <property type="protein sequence ID" value="NP_001037528.2"/>
    <property type="gene ID" value="GeneID_693070"/>
</dbReference>
<dbReference type="GeneID" id="693070"/>
<dbReference type="KEGG" id="bmor:693070"/>
<dbReference type="CTD" id="40045"/>
<dbReference type="eggNOG" id="KOG4218">
    <property type="taxonomic scope" value="Eukaryota"/>
</dbReference>
<dbReference type="InParanoid" id="P49867"/>
<dbReference type="OrthoDB" id="6355676at2759"/>
<dbReference type="Proteomes" id="UP000005204">
    <property type="component" value="Unassembled WGS sequence"/>
</dbReference>
<dbReference type="GO" id="GO:0090575">
    <property type="term" value="C:RNA polymerase II transcription regulator complex"/>
    <property type="evidence" value="ECO:0007669"/>
    <property type="project" value="TreeGrafter"/>
</dbReference>
<dbReference type="GO" id="GO:0004879">
    <property type="term" value="F:nuclear receptor activity"/>
    <property type="evidence" value="ECO:0007669"/>
    <property type="project" value="InterPro"/>
</dbReference>
<dbReference type="GO" id="GO:0000978">
    <property type="term" value="F:RNA polymerase II cis-regulatory region sequence-specific DNA binding"/>
    <property type="evidence" value="ECO:0007669"/>
    <property type="project" value="TreeGrafter"/>
</dbReference>
<dbReference type="GO" id="GO:0008270">
    <property type="term" value="F:zinc ion binding"/>
    <property type="evidence" value="ECO:0007669"/>
    <property type="project" value="UniProtKB-KW"/>
</dbReference>
<dbReference type="GO" id="GO:0009755">
    <property type="term" value="P:hormone-mediated signaling pathway"/>
    <property type="evidence" value="ECO:0007669"/>
    <property type="project" value="TreeGrafter"/>
</dbReference>
<dbReference type="GO" id="GO:0009888">
    <property type="term" value="P:tissue development"/>
    <property type="evidence" value="ECO:0007669"/>
    <property type="project" value="TreeGrafter"/>
</dbReference>
<dbReference type="CDD" id="cd07167">
    <property type="entry name" value="NR_DBD_Lrh-1_like"/>
    <property type="match status" value="1"/>
</dbReference>
<dbReference type="CDD" id="cd06944">
    <property type="entry name" value="NR_LBD_Ftz-F1_like"/>
    <property type="match status" value="1"/>
</dbReference>
<dbReference type="FunFam" id="1.10.565.10:FF:000032">
    <property type="entry name" value="Nuclear hormone receptor FTZ-F1"/>
    <property type="match status" value="1"/>
</dbReference>
<dbReference type="FunFam" id="3.30.50.10:FF:000006">
    <property type="entry name" value="Nuclear receptor subfamily 5 group A member"/>
    <property type="match status" value="1"/>
</dbReference>
<dbReference type="Gene3D" id="3.30.50.10">
    <property type="entry name" value="Erythroid Transcription Factor GATA-1, subunit A"/>
    <property type="match status" value="1"/>
</dbReference>
<dbReference type="Gene3D" id="1.10.565.10">
    <property type="entry name" value="Retinoid X Receptor"/>
    <property type="match status" value="1"/>
</dbReference>
<dbReference type="InterPro" id="IPR035500">
    <property type="entry name" value="NHR-like_dom_sf"/>
</dbReference>
<dbReference type="InterPro" id="IPR016355">
    <property type="entry name" value="NR5-like"/>
</dbReference>
<dbReference type="InterPro" id="IPR000536">
    <property type="entry name" value="Nucl_hrmn_rcpt_lig-bd"/>
</dbReference>
<dbReference type="InterPro" id="IPR001723">
    <property type="entry name" value="Nuclear_hrmn_rcpt"/>
</dbReference>
<dbReference type="InterPro" id="IPR001628">
    <property type="entry name" value="Znf_hrmn_rcpt"/>
</dbReference>
<dbReference type="InterPro" id="IPR013088">
    <property type="entry name" value="Znf_NHR/GATA"/>
</dbReference>
<dbReference type="PANTHER" id="PTHR24086:SF15">
    <property type="entry name" value="NUCLEAR HORMONE RECEPTOR FTZ-F1"/>
    <property type="match status" value="1"/>
</dbReference>
<dbReference type="PANTHER" id="PTHR24086">
    <property type="entry name" value="NUCLEAR RECEPTOR SUBFAMILY 5 GROUP A"/>
    <property type="match status" value="1"/>
</dbReference>
<dbReference type="Pfam" id="PF00104">
    <property type="entry name" value="Hormone_recep"/>
    <property type="match status" value="1"/>
</dbReference>
<dbReference type="Pfam" id="PF00105">
    <property type="entry name" value="zf-C4"/>
    <property type="match status" value="1"/>
</dbReference>
<dbReference type="PIRSF" id="PIRSF002530">
    <property type="entry name" value="Nuc_orph_FTZ-F1"/>
    <property type="match status" value="1"/>
</dbReference>
<dbReference type="PRINTS" id="PR00398">
    <property type="entry name" value="STRDHORMONER"/>
</dbReference>
<dbReference type="PRINTS" id="PR00047">
    <property type="entry name" value="STROIDFINGER"/>
</dbReference>
<dbReference type="SMART" id="SM00430">
    <property type="entry name" value="HOLI"/>
    <property type="match status" value="1"/>
</dbReference>
<dbReference type="SMART" id="SM00399">
    <property type="entry name" value="ZnF_C4"/>
    <property type="match status" value="1"/>
</dbReference>
<dbReference type="SUPFAM" id="SSF57716">
    <property type="entry name" value="Glucocorticoid receptor-like (DNA-binding domain)"/>
    <property type="match status" value="1"/>
</dbReference>
<dbReference type="SUPFAM" id="SSF48508">
    <property type="entry name" value="Nuclear receptor ligand-binding domain"/>
    <property type="match status" value="1"/>
</dbReference>
<dbReference type="PROSITE" id="PS51843">
    <property type="entry name" value="NR_LBD"/>
    <property type="match status" value="1"/>
</dbReference>
<dbReference type="PROSITE" id="PS00031">
    <property type="entry name" value="NUCLEAR_REC_DBD_1"/>
    <property type="match status" value="1"/>
</dbReference>
<dbReference type="PROSITE" id="PS51030">
    <property type="entry name" value="NUCLEAR_REC_DBD_2"/>
    <property type="match status" value="1"/>
</dbReference>
<comment type="function">
    <text>May play an important role in development.</text>
</comment>
<comment type="subcellular location">
    <subcellularLocation>
        <location evidence="1">Nucleus</location>
    </subcellularLocation>
</comment>
<comment type="tissue specificity">
    <text>Present in all tissues examined.</text>
</comment>
<comment type="developmental stage">
    <text>Expression is intermittent being high during larval molting and both the larval-pupal and the pupal-adult transformations.</text>
</comment>
<comment type="induction">
    <text>By 20-hydroxyecdysone, but is not expressed until the ecdysteroid titer falls.</text>
</comment>
<comment type="similarity">
    <text evidence="4">Belongs to the nuclear hormone receptor family. NR5 subfamily.</text>
</comment>
<comment type="sequence caution" evidence="4">
    <conflict type="frameshift">
        <sequence resource="EMBL-CDS" id="BAA01745"/>
    </conflict>
</comment>
<reference key="1">
    <citation type="journal article" date="1994" name="Dev. Biol.">
        <title>Intermittent expression of BmFTZ-F1, a member of the nuclear hormone receptor superfamily during development of the silkworm Bombyx mori.</title>
        <authorList>
            <person name="Sun G.-C."/>
            <person name="Hirose S."/>
            <person name="Ueda H."/>
        </authorList>
    </citation>
    <scope>NUCLEOTIDE SEQUENCE [MRNA]</scope>
    <scope>PARTIAL PROTEIN SEQUENCE</scope>
    <source>
        <strain>C108</strain>
        <tissue>Posterior silk gland</tissue>
    </source>
</reference>
<reference key="2">
    <citation type="submission" date="2001-10" db="EMBL/GenBank/DDBJ databases">
        <title>Inducible gene expression in transgenic silkmoth.</title>
        <authorList>
            <person name="Uhlirova M."/>
            <person name="Asahina M."/>
            <person name="Riddiford L.M."/>
            <person name="Jindra M."/>
        </authorList>
    </citation>
    <scope>NUCLEOTIDE SEQUENCE [MRNA]</scope>
    <source>
        <strain>Nistari</strain>
    </source>
</reference>
<gene>
    <name type="primary">FTZ-F1</name>
    <name type="synonym">NR5A3</name>
</gene>
<name>FTZF1_BOMMO</name>
<accession>P49867</accession>
<accession>Q95V56</accession>
<protein>
    <recommendedName>
        <fullName>Nuclear hormone receptor FTZ-F1</fullName>
    </recommendedName>
    <alternativeName>
        <fullName>BmFTZ-F1</fullName>
    </alternativeName>
    <alternativeName>
        <fullName>Nuclear receptor subfamily 5 group A member 3</fullName>
    </alternativeName>
</protein>
<feature type="chain" id="PRO_0000053738" description="Nuclear hormone receptor FTZ-F1">
    <location>
        <begin position="1"/>
        <end position="534"/>
    </location>
</feature>
<feature type="domain" description="NR LBD" evidence="2">
    <location>
        <begin position="299"/>
        <end position="531"/>
    </location>
</feature>
<feature type="DNA-binding region" description="Nuclear receptor" evidence="1">
    <location>
        <begin position="86"/>
        <end position="161"/>
    </location>
</feature>
<feature type="zinc finger region" description="NR C4-type" evidence="1">
    <location>
        <begin position="89"/>
        <end position="109"/>
    </location>
</feature>
<feature type="zinc finger region" description="NR C4-type" evidence="1">
    <location>
        <begin position="125"/>
        <end position="149"/>
    </location>
</feature>
<feature type="region of interest" description="Disordered" evidence="3">
    <location>
        <begin position="227"/>
        <end position="296"/>
    </location>
</feature>
<feature type="compositionally biased region" description="Low complexity" evidence="3">
    <location>
        <begin position="227"/>
        <end position="246"/>
    </location>
</feature>
<feature type="compositionally biased region" description="Pro residues" evidence="3">
    <location>
        <begin position="247"/>
        <end position="256"/>
    </location>
</feature>
<feature type="compositionally biased region" description="Low complexity" evidence="3">
    <location>
        <begin position="278"/>
        <end position="296"/>
    </location>
</feature>
<feature type="sequence conflict" description="In Ref. 1; BAA01745." evidence="4" ref="1">
    <original>G</original>
    <variation>R</variation>
    <location>
        <position position="244"/>
    </location>
</feature>
<feature type="sequence conflict" description="In Ref. 1; BAA01745." evidence="4" ref="1">
    <original>TLTCYP</original>
    <variation>PYLLS</variation>
    <location>
        <begin position="477"/>
        <end position="482"/>
    </location>
</feature>